<evidence type="ECO:0000255" key="1">
    <source>
        <dbReference type="HAMAP-Rule" id="MF_00491"/>
    </source>
</evidence>
<proteinExistence type="inferred from homology"/>
<name>NU4C_RANMC</name>
<keyword id="KW-0150">Chloroplast</keyword>
<keyword id="KW-0472">Membrane</keyword>
<keyword id="KW-0520">NAD</keyword>
<keyword id="KW-0521">NADP</keyword>
<keyword id="KW-0934">Plastid</keyword>
<keyword id="KW-0618">Plastoquinone</keyword>
<keyword id="KW-0874">Quinone</keyword>
<keyword id="KW-0793">Thylakoid</keyword>
<keyword id="KW-1278">Translocase</keyword>
<keyword id="KW-0812">Transmembrane</keyword>
<keyword id="KW-1133">Transmembrane helix</keyword>
<feature type="chain" id="PRO_0000343304" description="NAD(P)H-quinone oxidoreductase chain 4, chloroplastic">
    <location>
        <begin position="1"/>
        <end position="502"/>
    </location>
</feature>
<feature type="transmembrane region" description="Helical" evidence="1">
    <location>
        <begin position="4"/>
        <end position="24"/>
    </location>
</feature>
<feature type="transmembrane region" description="Helical" evidence="1">
    <location>
        <begin position="37"/>
        <end position="57"/>
    </location>
</feature>
<feature type="transmembrane region" description="Helical" evidence="1">
    <location>
        <begin position="87"/>
        <end position="107"/>
    </location>
</feature>
<feature type="transmembrane region" description="Helical" evidence="1">
    <location>
        <begin position="113"/>
        <end position="130"/>
    </location>
</feature>
<feature type="transmembrane region" description="Helical" evidence="1">
    <location>
        <begin position="134"/>
        <end position="154"/>
    </location>
</feature>
<feature type="transmembrane region" description="Helical" evidence="1">
    <location>
        <begin position="167"/>
        <end position="187"/>
    </location>
</feature>
<feature type="transmembrane region" description="Helical" evidence="1">
    <location>
        <begin position="208"/>
        <end position="228"/>
    </location>
</feature>
<feature type="transmembrane region" description="Helical" evidence="1">
    <location>
        <begin position="242"/>
        <end position="262"/>
    </location>
</feature>
<feature type="transmembrane region" description="Helical" evidence="1">
    <location>
        <begin position="272"/>
        <end position="292"/>
    </location>
</feature>
<feature type="transmembrane region" description="Helical" evidence="1">
    <location>
        <begin position="305"/>
        <end position="325"/>
    </location>
</feature>
<feature type="transmembrane region" description="Helical" evidence="1">
    <location>
        <begin position="330"/>
        <end position="350"/>
    </location>
</feature>
<feature type="transmembrane region" description="Helical" evidence="1">
    <location>
        <begin position="374"/>
        <end position="396"/>
    </location>
</feature>
<feature type="transmembrane region" description="Helical" evidence="1">
    <location>
        <begin position="416"/>
        <end position="436"/>
    </location>
</feature>
<feature type="transmembrane region" description="Helical" evidence="1">
    <location>
        <begin position="464"/>
        <end position="484"/>
    </location>
</feature>
<sequence length="502" mass="56596">MNDFPWLTIIVGLPIFAGTLIFFFPHRGNKIIRWYTICICILELLITAYVFCYHFQLDDPLIQLEQDYKWIHFFDFHWRLGIDGLSVGPILLTGFITTLATLAAWPVTRDSRLFHFLMLAMYSGQIGLFSSRDLLLFFIMWEFELIPVYLLLSMWGGKKRLYSATKFILYTAGGSIFLLMGVLGMGLYGSNEPTLNFETSANQPYPVALEILFYFGFLIGYAVKLPIIPLHTWLPDTHGEAHYSTCMLLAGILLKMGAYGLVRINMELLPHAHSIFSPWLIIVGAIQIIYAASTSLGQRNLKKRIAYSSVSHMGFIIIGICSITDTGLNGAILQMISHGFIGAALFFLAGTSYDRIRLVYLDEMGGIAIPMPKIFTMFSSFSMASLALPGMSGFAAELVVFFGLITSQKYLLMPKILITFVTAIGMILTPIYSLSMLRQMFYGYKQFKFKSLNSSFFDSGPRELFVSICIFLPVIGIGIYPDFVLSLSVDKVEAILSNYFYR</sequence>
<reference key="1">
    <citation type="journal article" date="2007" name="BMC Genomics">
        <title>Comparative chloroplast genomics: analyses including new sequences from the angiosperms Nuphar advena and Ranunculus macranthus.</title>
        <authorList>
            <person name="Raubeson L.A."/>
            <person name="Peery R."/>
            <person name="Chumley T.W."/>
            <person name="Dziubek C."/>
            <person name="Fourcade H.M."/>
            <person name="Boore J.L."/>
            <person name="Jansen R.K."/>
        </authorList>
    </citation>
    <scope>NUCLEOTIDE SEQUENCE [LARGE SCALE GENOMIC DNA]</scope>
</reference>
<organism>
    <name type="scientific">Ranunculus macranthus</name>
    <name type="common">Large buttercup</name>
    <dbReference type="NCBI Taxonomy" id="334596"/>
    <lineage>
        <taxon>Eukaryota</taxon>
        <taxon>Viridiplantae</taxon>
        <taxon>Streptophyta</taxon>
        <taxon>Embryophyta</taxon>
        <taxon>Tracheophyta</taxon>
        <taxon>Spermatophyta</taxon>
        <taxon>Magnoliopsida</taxon>
        <taxon>Ranunculales</taxon>
        <taxon>Ranunculaceae</taxon>
        <taxon>Ranunculoideae</taxon>
        <taxon>Ranunculeae</taxon>
        <taxon>Ranunculus</taxon>
    </lineage>
</organism>
<accession>A1XGU1</accession>
<comment type="catalytic activity">
    <reaction evidence="1">
        <text>a plastoquinone + NADH + (n+1) H(+)(in) = a plastoquinol + NAD(+) + n H(+)(out)</text>
        <dbReference type="Rhea" id="RHEA:42608"/>
        <dbReference type="Rhea" id="RHEA-COMP:9561"/>
        <dbReference type="Rhea" id="RHEA-COMP:9562"/>
        <dbReference type="ChEBI" id="CHEBI:15378"/>
        <dbReference type="ChEBI" id="CHEBI:17757"/>
        <dbReference type="ChEBI" id="CHEBI:57540"/>
        <dbReference type="ChEBI" id="CHEBI:57945"/>
        <dbReference type="ChEBI" id="CHEBI:62192"/>
    </reaction>
</comment>
<comment type="catalytic activity">
    <reaction evidence="1">
        <text>a plastoquinone + NADPH + (n+1) H(+)(in) = a plastoquinol + NADP(+) + n H(+)(out)</text>
        <dbReference type="Rhea" id="RHEA:42612"/>
        <dbReference type="Rhea" id="RHEA-COMP:9561"/>
        <dbReference type="Rhea" id="RHEA-COMP:9562"/>
        <dbReference type="ChEBI" id="CHEBI:15378"/>
        <dbReference type="ChEBI" id="CHEBI:17757"/>
        <dbReference type="ChEBI" id="CHEBI:57783"/>
        <dbReference type="ChEBI" id="CHEBI:58349"/>
        <dbReference type="ChEBI" id="CHEBI:62192"/>
    </reaction>
</comment>
<comment type="subcellular location">
    <subcellularLocation>
        <location evidence="1">Plastid</location>
        <location evidence="1">Chloroplast thylakoid membrane</location>
        <topology evidence="1">Multi-pass membrane protein</topology>
    </subcellularLocation>
</comment>
<comment type="similarity">
    <text evidence="1">Belongs to the complex I subunit 4 family.</text>
</comment>
<protein>
    <recommendedName>
        <fullName evidence="1">NAD(P)H-quinone oxidoreductase chain 4, chloroplastic</fullName>
        <ecNumber evidence="1">7.1.1.-</ecNumber>
    </recommendedName>
    <alternativeName>
        <fullName evidence="1">NAD(P)H dehydrogenase, chain 4</fullName>
    </alternativeName>
    <alternativeName>
        <fullName evidence="1">NADH-plastoquinone oxidoreductase chain 4</fullName>
    </alternativeName>
</protein>
<geneLocation type="chloroplast"/>
<dbReference type="EC" id="7.1.1.-" evidence="1"/>
<dbReference type="EMBL" id="DQ359689">
    <property type="protein sequence ID" value="ABC70809.1"/>
    <property type="molecule type" value="Genomic_DNA"/>
</dbReference>
<dbReference type="RefSeq" id="YP_001004239.1">
    <property type="nucleotide sequence ID" value="NC_008796.1"/>
</dbReference>
<dbReference type="SMR" id="A1XGU1"/>
<dbReference type="GeneID" id="4712097"/>
<dbReference type="GO" id="GO:0009535">
    <property type="term" value="C:chloroplast thylakoid membrane"/>
    <property type="evidence" value="ECO:0007669"/>
    <property type="project" value="UniProtKB-SubCell"/>
</dbReference>
<dbReference type="GO" id="GO:0008137">
    <property type="term" value="F:NADH dehydrogenase (ubiquinone) activity"/>
    <property type="evidence" value="ECO:0007669"/>
    <property type="project" value="InterPro"/>
</dbReference>
<dbReference type="GO" id="GO:0048039">
    <property type="term" value="F:ubiquinone binding"/>
    <property type="evidence" value="ECO:0007669"/>
    <property type="project" value="TreeGrafter"/>
</dbReference>
<dbReference type="GO" id="GO:0042773">
    <property type="term" value="P:ATP synthesis coupled electron transport"/>
    <property type="evidence" value="ECO:0007669"/>
    <property type="project" value="InterPro"/>
</dbReference>
<dbReference type="GO" id="GO:0015990">
    <property type="term" value="P:electron transport coupled proton transport"/>
    <property type="evidence" value="ECO:0007669"/>
    <property type="project" value="TreeGrafter"/>
</dbReference>
<dbReference type="HAMAP" id="MF_00491">
    <property type="entry name" value="NDH1_NuoM"/>
    <property type="match status" value="1"/>
</dbReference>
<dbReference type="InterPro" id="IPR022997">
    <property type="entry name" value="NADH_Q_OxRdtase_chain4"/>
</dbReference>
<dbReference type="InterPro" id="IPR010227">
    <property type="entry name" value="NADH_Q_OxRdtase_chainM/4"/>
</dbReference>
<dbReference type="InterPro" id="IPR003918">
    <property type="entry name" value="NADH_UbQ_OxRdtase"/>
</dbReference>
<dbReference type="InterPro" id="IPR001750">
    <property type="entry name" value="ND/Mrp_TM"/>
</dbReference>
<dbReference type="NCBIfam" id="TIGR01972">
    <property type="entry name" value="NDH_I_M"/>
    <property type="match status" value="1"/>
</dbReference>
<dbReference type="PANTHER" id="PTHR43507:SF21">
    <property type="entry name" value="NAD(P)H-QUINONE OXIDOREDUCTASE CHAIN 4, CHLOROPLASTIC"/>
    <property type="match status" value="1"/>
</dbReference>
<dbReference type="PANTHER" id="PTHR43507">
    <property type="entry name" value="NADH-UBIQUINONE OXIDOREDUCTASE CHAIN 4"/>
    <property type="match status" value="1"/>
</dbReference>
<dbReference type="Pfam" id="PF00361">
    <property type="entry name" value="Proton_antipo_M"/>
    <property type="match status" value="1"/>
</dbReference>
<dbReference type="PRINTS" id="PR01437">
    <property type="entry name" value="NUOXDRDTASE4"/>
</dbReference>
<gene>
    <name evidence="1" type="primary">ndhD</name>
</gene>